<dbReference type="EC" id="2.5.1.18"/>
<dbReference type="EMBL" id="AY514673">
    <property type="protein sequence ID" value="AAR98813.1"/>
    <property type="molecule type" value="mRNA"/>
</dbReference>
<dbReference type="SMR" id="Q6R4B4"/>
<dbReference type="Allergome" id="2542">
    <property type="allergen name" value="Alt a 13"/>
</dbReference>
<dbReference type="Allergome" id="3060">
    <property type="allergen name" value="Alt a 13.0101"/>
</dbReference>
<dbReference type="GO" id="GO:0004364">
    <property type="term" value="F:glutathione transferase activity"/>
    <property type="evidence" value="ECO:0007669"/>
    <property type="project" value="UniProtKB-EC"/>
</dbReference>
<dbReference type="Gene3D" id="1.20.1050.130">
    <property type="match status" value="1"/>
</dbReference>
<dbReference type="InterPro" id="IPR036282">
    <property type="entry name" value="Glutathione-S-Trfase_C_sf"/>
</dbReference>
<dbReference type="InterPro" id="IPR004045">
    <property type="entry name" value="Glutathione_S-Trfase_N"/>
</dbReference>
<dbReference type="InterPro" id="IPR036249">
    <property type="entry name" value="Thioredoxin-like_sf"/>
</dbReference>
<dbReference type="PANTHER" id="PTHR44051">
    <property type="entry name" value="GLUTATHIONE S-TRANSFERASE-RELATED"/>
    <property type="match status" value="1"/>
</dbReference>
<dbReference type="PANTHER" id="PTHR44051:SF20">
    <property type="entry name" value="GLUTATHIONE TRANSFERASE 1 (EUROFUNG)"/>
    <property type="match status" value="1"/>
</dbReference>
<dbReference type="Pfam" id="PF13409">
    <property type="entry name" value="GST_N_2"/>
    <property type="match status" value="1"/>
</dbReference>
<dbReference type="SUPFAM" id="SSF47616">
    <property type="entry name" value="GST C-terminal domain-like"/>
    <property type="match status" value="1"/>
</dbReference>
<dbReference type="SUPFAM" id="SSF52833">
    <property type="entry name" value="Thioredoxin-like"/>
    <property type="match status" value="1"/>
</dbReference>
<dbReference type="PROSITE" id="PS50404">
    <property type="entry name" value="GST_NTER"/>
    <property type="match status" value="1"/>
</dbReference>
<evidence type="ECO:0000269" key="1">
    <source>
    </source>
</evidence>
<evidence type="ECO:0000305" key="2"/>
<organism>
    <name type="scientific">Alternaria alternata</name>
    <name type="common">Alternaria rot fungus</name>
    <name type="synonym">Torula alternata</name>
    <dbReference type="NCBI Taxonomy" id="5599"/>
    <lineage>
        <taxon>Eukaryota</taxon>
        <taxon>Fungi</taxon>
        <taxon>Dikarya</taxon>
        <taxon>Ascomycota</taxon>
        <taxon>Pezizomycotina</taxon>
        <taxon>Dothideomycetes</taxon>
        <taxon>Pleosporomycetidae</taxon>
        <taxon>Pleosporales</taxon>
        <taxon>Pleosporineae</taxon>
        <taxon>Pleosporaceae</taxon>
        <taxon>Alternaria</taxon>
        <taxon>Alternaria sect. Alternaria</taxon>
        <taxon>Alternaria alternata complex</taxon>
    </lineage>
</organism>
<feature type="chain" id="PRO_0000345088" description="Glutathione-S-transferase">
    <location>
        <begin position="1"/>
        <end position="231"/>
    </location>
</feature>
<feature type="domain" description="GST N-terminal">
    <location>
        <begin position="15"/>
        <end position="98"/>
    </location>
</feature>
<accession>Q6R4B4</accession>
<comment type="function">
    <text evidence="1">Conjugation of reduced glutathione to a wide number of exogenous and endogenous hydrophobic electrophiles.</text>
</comment>
<comment type="catalytic activity">
    <reaction>
        <text>RX + glutathione = an S-substituted glutathione + a halide anion + H(+)</text>
        <dbReference type="Rhea" id="RHEA:16437"/>
        <dbReference type="ChEBI" id="CHEBI:15378"/>
        <dbReference type="ChEBI" id="CHEBI:16042"/>
        <dbReference type="ChEBI" id="CHEBI:17792"/>
        <dbReference type="ChEBI" id="CHEBI:57925"/>
        <dbReference type="ChEBI" id="CHEBI:90779"/>
        <dbReference type="EC" id="2.5.1.18"/>
    </reaction>
</comment>
<comment type="allergen">
    <text evidence="1">Causes an allergic reaction in human.</text>
</comment>
<comment type="similarity">
    <text evidence="2">Belongs to the GST superfamily.</text>
</comment>
<sequence>MSDKPSELAVQKLVLFAVKGTATSTHNTVRPLILLDELGVPHEIYVVDRVSAPWFTEINPHRMVPVILEKSPDGRDTLRAWESTSTLMYIADAYDKDGTFGGRNVQESSDINNWLTLHTAALGPTAKYWLYFYKLHPEKLPKTIEKLRSNITVQYDILERRLNEPGQQYLAWLNEKFKRSSYNRRHCYASLCYEKYRRVVRAGVKVAQTARVVCPYGGDTRRGVWPARKST</sequence>
<keyword id="KW-0020">Allergen</keyword>
<keyword id="KW-0808">Transferase</keyword>
<proteinExistence type="evidence at protein level"/>
<name>GST_ALTAL</name>
<protein>
    <recommendedName>
        <fullName>Glutathione-S-transferase</fullName>
        <ecNumber>2.5.1.18</ecNumber>
    </recommendedName>
    <allergenName>Alt a 13</allergenName>
</protein>
<reference key="1">
    <citation type="journal article" date="2006" name="Mol. Immunol.">
        <title>Recombinant glutathione-S-transferase a major allergen from Alternaria alternata for clinical use in allergy patients.</title>
        <authorList>
            <person name="Shankar J."/>
            <person name="Singh B.P."/>
            <person name="Gaur S.N."/>
            <person name="Arora N."/>
        </authorList>
    </citation>
    <scope>NUCLEOTIDE SEQUENCE [MRNA]</scope>
    <scope>FUNCTION</scope>
    <scope>ALLERGEN</scope>
    <source>
        <strain>ITCC 4789</strain>
    </source>
</reference>